<feature type="chain" id="PRO_1000117870" description="Bifunctional purine biosynthesis protein PurH">
    <location>
        <begin position="1"/>
        <end position="529"/>
    </location>
</feature>
<feature type="domain" description="MGS-like" evidence="2">
    <location>
        <begin position="1"/>
        <end position="148"/>
    </location>
</feature>
<feature type="modified residue" description="N6-acetyllysine" evidence="1">
    <location>
        <position position="287"/>
    </location>
</feature>
<organism>
    <name type="scientific">Escherichia coli O45:K1 (strain S88 / ExPEC)</name>
    <dbReference type="NCBI Taxonomy" id="585035"/>
    <lineage>
        <taxon>Bacteria</taxon>
        <taxon>Pseudomonadati</taxon>
        <taxon>Pseudomonadota</taxon>
        <taxon>Gammaproteobacteria</taxon>
        <taxon>Enterobacterales</taxon>
        <taxon>Enterobacteriaceae</taxon>
        <taxon>Escherichia</taxon>
    </lineage>
</organism>
<keyword id="KW-0007">Acetylation</keyword>
<keyword id="KW-0378">Hydrolase</keyword>
<keyword id="KW-0511">Multifunctional enzyme</keyword>
<keyword id="KW-0658">Purine biosynthesis</keyword>
<keyword id="KW-1185">Reference proteome</keyword>
<keyword id="KW-0808">Transferase</keyword>
<evidence type="ECO:0000255" key="1">
    <source>
        <dbReference type="HAMAP-Rule" id="MF_00139"/>
    </source>
</evidence>
<evidence type="ECO:0000255" key="2">
    <source>
        <dbReference type="PROSITE-ProRule" id="PRU01202"/>
    </source>
</evidence>
<name>PUR9_ECO45</name>
<proteinExistence type="inferred from homology"/>
<protein>
    <recommendedName>
        <fullName evidence="1">Bifunctional purine biosynthesis protein PurH</fullName>
    </recommendedName>
    <domain>
        <recommendedName>
            <fullName evidence="1">Phosphoribosylaminoimidazolecarboxamide formyltransferase</fullName>
            <ecNumber evidence="1">2.1.2.3</ecNumber>
        </recommendedName>
        <alternativeName>
            <fullName evidence="1">AICAR transformylase</fullName>
        </alternativeName>
    </domain>
    <domain>
        <recommendedName>
            <fullName evidence="1">IMP cyclohydrolase</fullName>
            <ecNumber evidence="1">3.5.4.10</ecNumber>
        </recommendedName>
        <alternativeName>
            <fullName evidence="1">ATIC</fullName>
        </alternativeName>
        <alternativeName>
            <fullName evidence="1">IMP synthase</fullName>
        </alternativeName>
        <alternativeName>
            <fullName evidence="1">Inosinicase</fullName>
        </alternativeName>
    </domain>
</protein>
<dbReference type="EC" id="2.1.2.3" evidence="1"/>
<dbReference type="EC" id="3.5.4.10" evidence="1"/>
<dbReference type="EMBL" id="CU928161">
    <property type="protein sequence ID" value="CAR05636.1"/>
    <property type="molecule type" value="Genomic_DNA"/>
</dbReference>
<dbReference type="RefSeq" id="WP_001187584.1">
    <property type="nucleotide sequence ID" value="NC_011742.1"/>
</dbReference>
<dbReference type="SMR" id="B7MIZ2"/>
<dbReference type="KEGG" id="ecz:ECS88_4467"/>
<dbReference type="HOGENOM" id="CLU_016316_5_2_6"/>
<dbReference type="UniPathway" id="UPA00074">
    <property type="reaction ID" value="UER00133"/>
</dbReference>
<dbReference type="UniPathway" id="UPA00074">
    <property type="reaction ID" value="UER00135"/>
</dbReference>
<dbReference type="Proteomes" id="UP000000747">
    <property type="component" value="Chromosome"/>
</dbReference>
<dbReference type="GO" id="GO:0005829">
    <property type="term" value="C:cytosol"/>
    <property type="evidence" value="ECO:0007669"/>
    <property type="project" value="TreeGrafter"/>
</dbReference>
<dbReference type="GO" id="GO:0003937">
    <property type="term" value="F:IMP cyclohydrolase activity"/>
    <property type="evidence" value="ECO:0007669"/>
    <property type="project" value="UniProtKB-UniRule"/>
</dbReference>
<dbReference type="GO" id="GO:0004643">
    <property type="term" value="F:phosphoribosylaminoimidazolecarboxamide formyltransferase activity"/>
    <property type="evidence" value="ECO:0007669"/>
    <property type="project" value="UniProtKB-UniRule"/>
</dbReference>
<dbReference type="GO" id="GO:0006189">
    <property type="term" value="P:'de novo' IMP biosynthetic process"/>
    <property type="evidence" value="ECO:0007669"/>
    <property type="project" value="UniProtKB-UniRule"/>
</dbReference>
<dbReference type="CDD" id="cd01421">
    <property type="entry name" value="IMPCH"/>
    <property type="match status" value="1"/>
</dbReference>
<dbReference type="FunFam" id="3.40.140.20:FF:000001">
    <property type="entry name" value="Bifunctional purine biosynthesis protein PurH"/>
    <property type="match status" value="1"/>
</dbReference>
<dbReference type="FunFam" id="3.40.140.20:FF:000002">
    <property type="entry name" value="Bifunctional purine biosynthesis protein PurH"/>
    <property type="match status" value="1"/>
</dbReference>
<dbReference type="FunFam" id="3.40.50.1380:FF:000001">
    <property type="entry name" value="Bifunctional purine biosynthesis protein PurH"/>
    <property type="match status" value="1"/>
</dbReference>
<dbReference type="Gene3D" id="3.40.140.20">
    <property type="match status" value="2"/>
</dbReference>
<dbReference type="Gene3D" id="3.40.50.1380">
    <property type="entry name" value="Methylglyoxal synthase-like domain"/>
    <property type="match status" value="1"/>
</dbReference>
<dbReference type="HAMAP" id="MF_00139">
    <property type="entry name" value="PurH"/>
    <property type="match status" value="1"/>
</dbReference>
<dbReference type="InterPro" id="IPR024051">
    <property type="entry name" value="AICAR_Tfase_dup_dom_sf"/>
</dbReference>
<dbReference type="InterPro" id="IPR016193">
    <property type="entry name" value="Cytidine_deaminase-like"/>
</dbReference>
<dbReference type="InterPro" id="IPR011607">
    <property type="entry name" value="MGS-like_dom"/>
</dbReference>
<dbReference type="InterPro" id="IPR036914">
    <property type="entry name" value="MGS-like_dom_sf"/>
</dbReference>
<dbReference type="InterPro" id="IPR002695">
    <property type="entry name" value="PurH-like"/>
</dbReference>
<dbReference type="NCBIfam" id="NF002049">
    <property type="entry name" value="PRK00881.1"/>
    <property type="match status" value="1"/>
</dbReference>
<dbReference type="NCBIfam" id="TIGR00355">
    <property type="entry name" value="purH"/>
    <property type="match status" value="1"/>
</dbReference>
<dbReference type="PANTHER" id="PTHR11692:SF0">
    <property type="entry name" value="BIFUNCTIONAL PURINE BIOSYNTHESIS PROTEIN ATIC"/>
    <property type="match status" value="1"/>
</dbReference>
<dbReference type="PANTHER" id="PTHR11692">
    <property type="entry name" value="BIFUNCTIONAL PURINE BIOSYNTHESIS PROTEIN PURH"/>
    <property type="match status" value="1"/>
</dbReference>
<dbReference type="Pfam" id="PF01808">
    <property type="entry name" value="AICARFT_IMPCHas"/>
    <property type="match status" value="1"/>
</dbReference>
<dbReference type="Pfam" id="PF02142">
    <property type="entry name" value="MGS"/>
    <property type="match status" value="1"/>
</dbReference>
<dbReference type="PIRSF" id="PIRSF000414">
    <property type="entry name" value="AICARFT_IMPCHas"/>
    <property type="match status" value="1"/>
</dbReference>
<dbReference type="SMART" id="SM00798">
    <property type="entry name" value="AICARFT_IMPCHas"/>
    <property type="match status" value="1"/>
</dbReference>
<dbReference type="SMART" id="SM00851">
    <property type="entry name" value="MGS"/>
    <property type="match status" value="1"/>
</dbReference>
<dbReference type="SUPFAM" id="SSF53927">
    <property type="entry name" value="Cytidine deaminase-like"/>
    <property type="match status" value="1"/>
</dbReference>
<dbReference type="SUPFAM" id="SSF52335">
    <property type="entry name" value="Methylglyoxal synthase-like"/>
    <property type="match status" value="1"/>
</dbReference>
<dbReference type="PROSITE" id="PS51855">
    <property type="entry name" value="MGS"/>
    <property type="match status" value="1"/>
</dbReference>
<sequence>MQQRRPVRRALLSVSDKAGIVEFAQALSARGVELLSTGGTARLLAEKGLPVTEVSDYTGFPEMMDGRVKTLHPKVHGGILGRRGQDDTIMEEHQIQPIDMVVVNLYPFAQTVAREGCSLEDAVENIDIGGPTMVRSAAKNHKDVAIVVKSSDYDAIIKEIDANEGSLTLETRFDLAIKAFEHTAAYDSMIANYFGSMVPAYHGESKEAAGRFPRTLNLNFIKKQDMRYGENSHQQAAFYIEENVKEASVATATQVQGKALSYNNIADTDAALECVKEFAEPACVIVKHANPCGVAIGNSILDAYDRAYKTDPTSAFGGIIAFNRELDAETAQAIISRQFVEVIIAPSASEEALKITAAKQNVRVLTCGQWGERVPGLDFKRVNGGLLVQDRDLGMVGAEELRVVTKRQPTEQELRDALFCWKVAKFVKSNAIVYAKNNMTIGIGAGQMSRVYSAKIAGIKAADEGLEVKGSSMASDAFFPFRDGIDAAAAAGVTCVIQPGGSIRDDEVIAAADEHGIAMLFTDMRHFRH</sequence>
<accession>B7MIZ2</accession>
<gene>
    <name evidence="1" type="primary">purH</name>
    <name type="ordered locus">ECS88_4467</name>
</gene>
<reference key="1">
    <citation type="journal article" date="2009" name="PLoS Genet.">
        <title>Organised genome dynamics in the Escherichia coli species results in highly diverse adaptive paths.</title>
        <authorList>
            <person name="Touchon M."/>
            <person name="Hoede C."/>
            <person name="Tenaillon O."/>
            <person name="Barbe V."/>
            <person name="Baeriswyl S."/>
            <person name="Bidet P."/>
            <person name="Bingen E."/>
            <person name="Bonacorsi S."/>
            <person name="Bouchier C."/>
            <person name="Bouvet O."/>
            <person name="Calteau A."/>
            <person name="Chiapello H."/>
            <person name="Clermont O."/>
            <person name="Cruveiller S."/>
            <person name="Danchin A."/>
            <person name="Diard M."/>
            <person name="Dossat C."/>
            <person name="Karoui M.E."/>
            <person name="Frapy E."/>
            <person name="Garry L."/>
            <person name="Ghigo J.M."/>
            <person name="Gilles A.M."/>
            <person name="Johnson J."/>
            <person name="Le Bouguenec C."/>
            <person name="Lescat M."/>
            <person name="Mangenot S."/>
            <person name="Martinez-Jehanne V."/>
            <person name="Matic I."/>
            <person name="Nassif X."/>
            <person name="Oztas S."/>
            <person name="Petit M.A."/>
            <person name="Pichon C."/>
            <person name="Rouy Z."/>
            <person name="Ruf C.S."/>
            <person name="Schneider D."/>
            <person name="Tourret J."/>
            <person name="Vacherie B."/>
            <person name="Vallenet D."/>
            <person name="Medigue C."/>
            <person name="Rocha E.P.C."/>
            <person name="Denamur E."/>
        </authorList>
    </citation>
    <scope>NUCLEOTIDE SEQUENCE [LARGE SCALE GENOMIC DNA]</scope>
    <source>
        <strain>S88 / ExPEC</strain>
    </source>
</reference>
<comment type="catalytic activity">
    <reaction evidence="1">
        <text>(6R)-10-formyltetrahydrofolate + 5-amino-1-(5-phospho-beta-D-ribosyl)imidazole-4-carboxamide = 5-formamido-1-(5-phospho-D-ribosyl)imidazole-4-carboxamide + (6S)-5,6,7,8-tetrahydrofolate</text>
        <dbReference type="Rhea" id="RHEA:22192"/>
        <dbReference type="ChEBI" id="CHEBI:57453"/>
        <dbReference type="ChEBI" id="CHEBI:58467"/>
        <dbReference type="ChEBI" id="CHEBI:58475"/>
        <dbReference type="ChEBI" id="CHEBI:195366"/>
        <dbReference type="EC" id="2.1.2.3"/>
    </reaction>
</comment>
<comment type="catalytic activity">
    <reaction evidence="1">
        <text>IMP + H2O = 5-formamido-1-(5-phospho-D-ribosyl)imidazole-4-carboxamide</text>
        <dbReference type="Rhea" id="RHEA:18445"/>
        <dbReference type="ChEBI" id="CHEBI:15377"/>
        <dbReference type="ChEBI" id="CHEBI:58053"/>
        <dbReference type="ChEBI" id="CHEBI:58467"/>
        <dbReference type="EC" id="3.5.4.10"/>
    </reaction>
</comment>
<comment type="pathway">
    <text evidence="1">Purine metabolism; IMP biosynthesis via de novo pathway; 5-formamido-1-(5-phospho-D-ribosyl)imidazole-4-carboxamide from 5-amino-1-(5-phospho-D-ribosyl)imidazole-4-carboxamide (10-formyl THF route): step 1/1.</text>
</comment>
<comment type="pathway">
    <text evidence="1">Purine metabolism; IMP biosynthesis via de novo pathway; IMP from 5-formamido-1-(5-phospho-D-ribosyl)imidazole-4-carboxamide: step 1/1.</text>
</comment>
<comment type="domain">
    <text evidence="1">The IMP cyclohydrolase activity resides in the N-terminal region.</text>
</comment>
<comment type="similarity">
    <text evidence="1">Belongs to the PurH family.</text>
</comment>